<sequence length="926" mass="103673">MAASPNPLQGSLFEESKQSTTNGGKETNNSIGSSENLSNQQLKSDASLRPRIRKTSKNPNQINDLDQLSNAEIEEPKWSHHNLPKIDDLTPALKHYVQLKIENPDRVLLYRLGDFFECFFEDAITLSQLLEITLTSKEGGKKIGKVPMAGIPHHASDRYCTELIKKGLSIAICDQLEAAPSKGNKLIKRGITRLITPGTIIEEGMLSAKQNNWLASVLLESDSNSDFVNWSLAKLDVSTGEFLVQEGKETNNLRQELIKLKAAEVISESKSISNQNWYKGLIEITEFNQTSFSRLEAKTTIENHYFLNNIDGLGIHPESLSIRTIGGLIAYLNKTHPNIGNNLKNEVKTNICIDFPQIKHNQAGLIIDNQTRRNLEITSTQKNGQFQGSLLWAIDKTLTAMGGRCIRRWLEEPLTEIYSIQSRQKIIGLLVESSSLRKNIRKILRAMGDLERLSGRAGAQQAGARDLIAIAEGINRLPLIKKYLNDPIFEETKYFESIINLDRDLIELASKINNEIIDNPPLSLTEGGLIFDGVNPILDGLRNQLDDHNSWLKSQEIEERKNSNINNLKLQYHRSFGYFLAVSKAKSINVPDHWIRRQTLTNEERFVTPELKEREGKIFQLRARISQLEYDLFCKLRILVGNKSDIIRKAAKAISCLDVLSGLAELAATNNYIQPKIIDNKDSTKTRRLSIVDGRHPVVEQILVDKFFVPNDIELGSKTDLIILSGPNASGKSCYLRQVGLLQIMAQIGSWIPAKSANIGIADQLFTRVGAVDDLASGQSTFMVEMIETAFILNNATENSLVLLDEIGRGTSTFDGLSIAWSVSEFLAKKIKSRSIFATHYHELNQISEYIENVENYKVVVEYKNHSLSFLHKVEKGGANKSYGIEAARLAGVPPDVVNNARLILKNLEKNNSNTIQITKPIESCK</sequence>
<organism>
    <name type="scientific">Prochlorococcus marinus (strain NATL1A)</name>
    <dbReference type="NCBI Taxonomy" id="167555"/>
    <lineage>
        <taxon>Bacteria</taxon>
        <taxon>Bacillati</taxon>
        <taxon>Cyanobacteriota</taxon>
        <taxon>Cyanophyceae</taxon>
        <taxon>Synechococcales</taxon>
        <taxon>Prochlorococcaceae</taxon>
        <taxon>Prochlorococcus</taxon>
    </lineage>
</organism>
<gene>
    <name evidence="1" type="primary">mutS</name>
    <name type="ordered locus">NATL1_21131</name>
</gene>
<name>MUTS_PROM1</name>
<accession>A2C5A9</accession>
<proteinExistence type="inferred from homology"/>
<reference key="1">
    <citation type="journal article" date="2007" name="PLoS Genet.">
        <title>Patterns and implications of gene gain and loss in the evolution of Prochlorococcus.</title>
        <authorList>
            <person name="Kettler G.C."/>
            <person name="Martiny A.C."/>
            <person name="Huang K."/>
            <person name="Zucker J."/>
            <person name="Coleman M.L."/>
            <person name="Rodrigue S."/>
            <person name="Chen F."/>
            <person name="Lapidus A."/>
            <person name="Ferriera S."/>
            <person name="Johnson J."/>
            <person name="Steglich C."/>
            <person name="Church G.M."/>
            <person name="Richardson P."/>
            <person name="Chisholm S.W."/>
        </authorList>
    </citation>
    <scope>NUCLEOTIDE SEQUENCE [LARGE SCALE GENOMIC DNA]</scope>
    <source>
        <strain>NATL1A</strain>
    </source>
</reference>
<evidence type="ECO:0000255" key="1">
    <source>
        <dbReference type="HAMAP-Rule" id="MF_00096"/>
    </source>
</evidence>
<evidence type="ECO:0000256" key="2">
    <source>
        <dbReference type="SAM" id="MobiDB-lite"/>
    </source>
</evidence>
<dbReference type="EMBL" id="CP000553">
    <property type="protein sequence ID" value="ABM76669.1"/>
    <property type="molecule type" value="Genomic_DNA"/>
</dbReference>
<dbReference type="RefSeq" id="WP_011824613.1">
    <property type="nucleotide sequence ID" value="NC_008819.1"/>
</dbReference>
<dbReference type="SMR" id="A2C5A9"/>
<dbReference type="KEGG" id="pme:NATL1_21131"/>
<dbReference type="eggNOG" id="COG0249">
    <property type="taxonomic scope" value="Bacteria"/>
</dbReference>
<dbReference type="HOGENOM" id="CLU_002472_1_3_3"/>
<dbReference type="Proteomes" id="UP000002592">
    <property type="component" value="Chromosome"/>
</dbReference>
<dbReference type="GO" id="GO:0005829">
    <property type="term" value="C:cytosol"/>
    <property type="evidence" value="ECO:0007669"/>
    <property type="project" value="TreeGrafter"/>
</dbReference>
<dbReference type="GO" id="GO:0005524">
    <property type="term" value="F:ATP binding"/>
    <property type="evidence" value="ECO:0007669"/>
    <property type="project" value="UniProtKB-UniRule"/>
</dbReference>
<dbReference type="GO" id="GO:0140664">
    <property type="term" value="F:ATP-dependent DNA damage sensor activity"/>
    <property type="evidence" value="ECO:0007669"/>
    <property type="project" value="InterPro"/>
</dbReference>
<dbReference type="GO" id="GO:0003684">
    <property type="term" value="F:damaged DNA binding"/>
    <property type="evidence" value="ECO:0007669"/>
    <property type="project" value="UniProtKB-UniRule"/>
</dbReference>
<dbReference type="GO" id="GO:0030983">
    <property type="term" value="F:mismatched DNA binding"/>
    <property type="evidence" value="ECO:0007669"/>
    <property type="project" value="InterPro"/>
</dbReference>
<dbReference type="GO" id="GO:0006298">
    <property type="term" value="P:mismatch repair"/>
    <property type="evidence" value="ECO:0007669"/>
    <property type="project" value="UniProtKB-UniRule"/>
</dbReference>
<dbReference type="CDD" id="cd03284">
    <property type="entry name" value="ABC_MutS1"/>
    <property type="match status" value="1"/>
</dbReference>
<dbReference type="FunFam" id="3.40.50.300:FF:000870">
    <property type="entry name" value="MutS protein homolog 4"/>
    <property type="match status" value="1"/>
</dbReference>
<dbReference type="Gene3D" id="1.10.1420.10">
    <property type="match status" value="2"/>
</dbReference>
<dbReference type="Gene3D" id="3.40.1170.10">
    <property type="entry name" value="DNA repair protein MutS, domain I"/>
    <property type="match status" value="1"/>
</dbReference>
<dbReference type="Gene3D" id="3.30.420.110">
    <property type="entry name" value="MutS, connector domain"/>
    <property type="match status" value="1"/>
</dbReference>
<dbReference type="Gene3D" id="3.40.50.300">
    <property type="entry name" value="P-loop containing nucleotide triphosphate hydrolases"/>
    <property type="match status" value="1"/>
</dbReference>
<dbReference type="HAMAP" id="MF_00096">
    <property type="entry name" value="MutS"/>
    <property type="match status" value="1"/>
</dbReference>
<dbReference type="InterPro" id="IPR005748">
    <property type="entry name" value="DNA_mismatch_repair_MutS"/>
</dbReference>
<dbReference type="InterPro" id="IPR007695">
    <property type="entry name" value="DNA_mismatch_repair_MutS-lik_N"/>
</dbReference>
<dbReference type="InterPro" id="IPR017261">
    <property type="entry name" value="DNA_mismatch_repair_MutS/MSH"/>
</dbReference>
<dbReference type="InterPro" id="IPR000432">
    <property type="entry name" value="DNA_mismatch_repair_MutS_C"/>
</dbReference>
<dbReference type="InterPro" id="IPR007861">
    <property type="entry name" value="DNA_mismatch_repair_MutS_clamp"/>
</dbReference>
<dbReference type="InterPro" id="IPR007696">
    <property type="entry name" value="DNA_mismatch_repair_MutS_core"/>
</dbReference>
<dbReference type="InterPro" id="IPR016151">
    <property type="entry name" value="DNA_mismatch_repair_MutS_N"/>
</dbReference>
<dbReference type="InterPro" id="IPR036187">
    <property type="entry name" value="DNA_mismatch_repair_MutS_sf"/>
</dbReference>
<dbReference type="InterPro" id="IPR007860">
    <property type="entry name" value="DNA_mmatch_repair_MutS_con_dom"/>
</dbReference>
<dbReference type="InterPro" id="IPR045076">
    <property type="entry name" value="MutS"/>
</dbReference>
<dbReference type="InterPro" id="IPR036678">
    <property type="entry name" value="MutS_con_dom_sf"/>
</dbReference>
<dbReference type="InterPro" id="IPR027417">
    <property type="entry name" value="P-loop_NTPase"/>
</dbReference>
<dbReference type="NCBIfam" id="TIGR01070">
    <property type="entry name" value="mutS1"/>
    <property type="match status" value="1"/>
</dbReference>
<dbReference type="NCBIfam" id="NF003810">
    <property type="entry name" value="PRK05399.1"/>
    <property type="match status" value="1"/>
</dbReference>
<dbReference type="PANTHER" id="PTHR11361:SF34">
    <property type="entry name" value="DNA MISMATCH REPAIR PROTEIN MSH1, MITOCHONDRIAL"/>
    <property type="match status" value="1"/>
</dbReference>
<dbReference type="PANTHER" id="PTHR11361">
    <property type="entry name" value="DNA MISMATCH REPAIR PROTEIN MUTS FAMILY MEMBER"/>
    <property type="match status" value="1"/>
</dbReference>
<dbReference type="Pfam" id="PF01624">
    <property type="entry name" value="MutS_I"/>
    <property type="match status" value="1"/>
</dbReference>
<dbReference type="Pfam" id="PF05188">
    <property type="entry name" value="MutS_II"/>
    <property type="match status" value="1"/>
</dbReference>
<dbReference type="Pfam" id="PF05192">
    <property type="entry name" value="MutS_III"/>
    <property type="match status" value="1"/>
</dbReference>
<dbReference type="Pfam" id="PF05190">
    <property type="entry name" value="MutS_IV"/>
    <property type="match status" value="1"/>
</dbReference>
<dbReference type="Pfam" id="PF00488">
    <property type="entry name" value="MutS_V"/>
    <property type="match status" value="1"/>
</dbReference>
<dbReference type="PIRSF" id="PIRSF037677">
    <property type="entry name" value="DNA_mis_repair_Msh6"/>
    <property type="match status" value="1"/>
</dbReference>
<dbReference type="SMART" id="SM00534">
    <property type="entry name" value="MUTSac"/>
    <property type="match status" value="1"/>
</dbReference>
<dbReference type="SMART" id="SM00533">
    <property type="entry name" value="MUTSd"/>
    <property type="match status" value="1"/>
</dbReference>
<dbReference type="SUPFAM" id="SSF55271">
    <property type="entry name" value="DNA repair protein MutS, domain I"/>
    <property type="match status" value="1"/>
</dbReference>
<dbReference type="SUPFAM" id="SSF53150">
    <property type="entry name" value="DNA repair protein MutS, domain II"/>
    <property type="match status" value="1"/>
</dbReference>
<dbReference type="SUPFAM" id="SSF48334">
    <property type="entry name" value="DNA repair protein MutS, domain III"/>
    <property type="match status" value="1"/>
</dbReference>
<dbReference type="SUPFAM" id="SSF52540">
    <property type="entry name" value="P-loop containing nucleoside triphosphate hydrolases"/>
    <property type="match status" value="1"/>
</dbReference>
<dbReference type="PROSITE" id="PS00486">
    <property type="entry name" value="DNA_MISMATCH_REPAIR_2"/>
    <property type="match status" value="1"/>
</dbReference>
<protein>
    <recommendedName>
        <fullName evidence="1">DNA mismatch repair protein MutS</fullName>
    </recommendedName>
</protein>
<keyword id="KW-0067">ATP-binding</keyword>
<keyword id="KW-0227">DNA damage</keyword>
<keyword id="KW-0234">DNA repair</keyword>
<keyword id="KW-0238">DNA-binding</keyword>
<keyword id="KW-0547">Nucleotide-binding</keyword>
<comment type="function">
    <text evidence="1">This protein is involved in the repair of mismatches in DNA. It is possible that it carries out the mismatch recognition step. This protein has a weak ATPase activity.</text>
</comment>
<comment type="similarity">
    <text evidence="1">Belongs to the DNA mismatch repair MutS family.</text>
</comment>
<feature type="chain" id="PRO_0000335201" description="DNA mismatch repair protein MutS">
    <location>
        <begin position="1"/>
        <end position="926"/>
    </location>
</feature>
<feature type="region of interest" description="Disordered" evidence="2">
    <location>
        <begin position="1"/>
        <end position="67"/>
    </location>
</feature>
<feature type="compositionally biased region" description="Polar residues" evidence="2">
    <location>
        <begin position="18"/>
        <end position="44"/>
    </location>
</feature>
<feature type="compositionally biased region" description="Polar residues" evidence="2">
    <location>
        <begin position="57"/>
        <end position="67"/>
    </location>
</feature>
<feature type="binding site" evidence="1">
    <location>
        <begin position="726"/>
        <end position="733"/>
    </location>
    <ligand>
        <name>ATP</name>
        <dbReference type="ChEBI" id="CHEBI:30616"/>
    </ligand>
</feature>